<accession>B4TUF0</accession>
<feature type="chain" id="PRO_1000098612" description="Threonine--tRNA ligase">
    <location>
        <begin position="1"/>
        <end position="642"/>
    </location>
</feature>
<feature type="domain" description="TGS" evidence="2">
    <location>
        <begin position="1"/>
        <end position="61"/>
    </location>
</feature>
<feature type="region of interest" description="Catalytic" evidence="1">
    <location>
        <begin position="243"/>
        <end position="534"/>
    </location>
</feature>
<feature type="binding site" evidence="1">
    <location>
        <position position="334"/>
    </location>
    <ligand>
        <name>Zn(2+)</name>
        <dbReference type="ChEBI" id="CHEBI:29105"/>
    </ligand>
</feature>
<feature type="binding site" evidence="1">
    <location>
        <position position="385"/>
    </location>
    <ligand>
        <name>Zn(2+)</name>
        <dbReference type="ChEBI" id="CHEBI:29105"/>
    </ligand>
</feature>
<feature type="binding site" evidence="1">
    <location>
        <position position="511"/>
    </location>
    <ligand>
        <name>Zn(2+)</name>
        <dbReference type="ChEBI" id="CHEBI:29105"/>
    </ligand>
</feature>
<gene>
    <name evidence="1" type="primary">thrS</name>
    <name type="ordered locus">SeSA_A1428</name>
</gene>
<organism>
    <name type="scientific">Salmonella schwarzengrund (strain CVM19633)</name>
    <dbReference type="NCBI Taxonomy" id="439843"/>
    <lineage>
        <taxon>Bacteria</taxon>
        <taxon>Pseudomonadati</taxon>
        <taxon>Pseudomonadota</taxon>
        <taxon>Gammaproteobacteria</taxon>
        <taxon>Enterobacterales</taxon>
        <taxon>Enterobacteriaceae</taxon>
        <taxon>Salmonella</taxon>
    </lineage>
</organism>
<name>SYT_SALSV</name>
<evidence type="ECO:0000255" key="1">
    <source>
        <dbReference type="HAMAP-Rule" id="MF_00184"/>
    </source>
</evidence>
<evidence type="ECO:0000255" key="2">
    <source>
        <dbReference type="PROSITE-ProRule" id="PRU01228"/>
    </source>
</evidence>
<proteinExistence type="inferred from homology"/>
<dbReference type="EC" id="6.1.1.3" evidence="1"/>
<dbReference type="EMBL" id="CP001127">
    <property type="protein sequence ID" value="ACF91428.1"/>
    <property type="molecule type" value="Genomic_DNA"/>
</dbReference>
<dbReference type="RefSeq" id="WP_001144226.1">
    <property type="nucleotide sequence ID" value="NC_011094.1"/>
</dbReference>
<dbReference type="SMR" id="B4TUF0"/>
<dbReference type="KEGG" id="sew:SeSA_A1428"/>
<dbReference type="HOGENOM" id="CLU_008554_0_1_6"/>
<dbReference type="Proteomes" id="UP000001865">
    <property type="component" value="Chromosome"/>
</dbReference>
<dbReference type="GO" id="GO:0005829">
    <property type="term" value="C:cytosol"/>
    <property type="evidence" value="ECO:0007669"/>
    <property type="project" value="TreeGrafter"/>
</dbReference>
<dbReference type="GO" id="GO:0005524">
    <property type="term" value="F:ATP binding"/>
    <property type="evidence" value="ECO:0007669"/>
    <property type="project" value="UniProtKB-UniRule"/>
</dbReference>
<dbReference type="GO" id="GO:0046872">
    <property type="term" value="F:metal ion binding"/>
    <property type="evidence" value="ECO:0007669"/>
    <property type="project" value="UniProtKB-KW"/>
</dbReference>
<dbReference type="GO" id="GO:0004829">
    <property type="term" value="F:threonine-tRNA ligase activity"/>
    <property type="evidence" value="ECO:0007669"/>
    <property type="project" value="UniProtKB-UniRule"/>
</dbReference>
<dbReference type="GO" id="GO:0000049">
    <property type="term" value="F:tRNA binding"/>
    <property type="evidence" value="ECO:0007669"/>
    <property type="project" value="UniProtKB-KW"/>
</dbReference>
<dbReference type="GO" id="GO:0006435">
    <property type="term" value="P:threonyl-tRNA aminoacylation"/>
    <property type="evidence" value="ECO:0007669"/>
    <property type="project" value="UniProtKB-UniRule"/>
</dbReference>
<dbReference type="CDD" id="cd01667">
    <property type="entry name" value="TGS_ThrRS"/>
    <property type="match status" value="1"/>
</dbReference>
<dbReference type="CDD" id="cd00860">
    <property type="entry name" value="ThrRS_anticodon"/>
    <property type="match status" value="1"/>
</dbReference>
<dbReference type="CDD" id="cd00771">
    <property type="entry name" value="ThrRS_core"/>
    <property type="match status" value="1"/>
</dbReference>
<dbReference type="FunFam" id="3.10.20.30:FF:000005">
    <property type="entry name" value="Threonine--tRNA ligase"/>
    <property type="match status" value="1"/>
</dbReference>
<dbReference type="FunFam" id="3.30.54.20:FF:000002">
    <property type="entry name" value="Threonine--tRNA ligase"/>
    <property type="match status" value="1"/>
</dbReference>
<dbReference type="FunFam" id="3.30.930.10:FF:000002">
    <property type="entry name" value="Threonine--tRNA ligase"/>
    <property type="match status" value="1"/>
</dbReference>
<dbReference type="FunFam" id="3.40.50.800:FF:000001">
    <property type="entry name" value="Threonine--tRNA ligase"/>
    <property type="match status" value="1"/>
</dbReference>
<dbReference type="FunFam" id="3.30.980.10:FF:000005">
    <property type="entry name" value="Threonyl-tRNA synthetase, mitochondrial"/>
    <property type="match status" value="1"/>
</dbReference>
<dbReference type="Gene3D" id="3.10.20.30">
    <property type="match status" value="1"/>
</dbReference>
<dbReference type="Gene3D" id="3.30.54.20">
    <property type="match status" value="1"/>
</dbReference>
<dbReference type="Gene3D" id="3.40.50.800">
    <property type="entry name" value="Anticodon-binding domain"/>
    <property type="match status" value="1"/>
</dbReference>
<dbReference type="Gene3D" id="3.30.930.10">
    <property type="entry name" value="Bira Bifunctional Protein, Domain 2"/>
    <property type="match status" value="1"/>
</dbReference>
<dbReference type="Gene3D" id="3.30.980.10">
    <property type="entry name" value="Threonyl-trna Synthetase, Chain A, domain 2"/>
    <property type="match status" value="1"/>
</dbReference>
<dbReference type="HAMAP" id="MF_00184">
    <property type="entry name" value="Thr_tRNA_synth"/>
    <property type="match status" value="1"/>
</dbReference>
<dbReference type="InterPro" id="IPR002314">
    <property type="entry name" value="aa-tRNA-synt_IIb"/>
</dbReference>
<dbReference type="InterPro" id="IPR006195">
    <property type="entry name" value="aa-tRNA-synth_II"/>
</dbReference>
<dbReference type="InterPro" id="IPR045864">
    <property type="entry name" value="aa-tRNA-synth_II/BPL/LPL"/>
</dbReference>
<dbReference type="InterPro" id="IPR004154">
    <property type="entry name" value="Anticodon-bd"/>
</dbReference>
<dbReference type="InterPro" id="IPR036621">
    <property type="entry name" value="Anticodon-bd_dom_sf"/>
</dbReference>
<dbReference type="InterPro" id="IPR012675">
    <property type="entry name" value="Beta-grasp_dom_sf"/>
</dbReference>
<dbReference type="InterPro" id="IPR004095">
    <property type="entry name" value="TGS"/>
</dbReference>
<dbReference type="InterPro" id="IPR012676">
    <property type="entry name" value="TGS-like"/>
</dbReference>
<dbReference type="InterPro" id="IPR002320">
    <property type="entry name" value="Thr-tRNA-ligase_IIa"/>
</dbReference>
<dbReference type="InterPro" id="IPR018163">
    <property type="entry name" value="Thr/Ala-tRNA-synth_IIc_edit"/>
</dbReference>
<dbReference type="InterPro" id="IPR047246">
    <property type="entry name" value="ThrRS_anticodon"/>
</dbReference>
<dbReference type="InterPro" id="IPR033728">
    <property type="entry name" value="ThrRS_core"/>
</dbReference>
<dbReference type="InterPro" id="IPR012947">
    <property type="entry name" value="tRNA_SAD"/>
</dbReference>
<dbReference type="NCBIfam" id="TIGR00418">
    <property type="entry name" value="thrS"/>
    <property type="match status" value="1"/>
</dbReference>
<dbReference type="PANTHER" id="PTHR11451:SF44">
    <property type="entry name" value="THREONINE--TRNA LIGASE, CHLOROPLASTIC_MITOCHONDRIAL 2"/>
    <property type="match status" value="1"/>
</dbReference>
<dbReference type="PANTHER" id="PTHR11451">
    <property type="entry name" value="THREONINE-TRNA LIGASE"/>
    <property type="match status" value="1"/>
</dbReference>
<dbReference type="Pfam" id="PF03129">
    <property type="entry name" value="HGTP_anticodon"/>
    <property type="match status" value="1"/>
</dbReference>
<dbReference type="Pfam" id="PF02824">
    <property type="entry name" value="TGS"/>
    <property type="match status" value="1"/>
</dbReference>
<dbReference type="Pfam" id="PF00587">
    <property type="entry name" value="tRNA-synt_2b"/>
    <property type="match status" value="1"/>
</dbReference>
<dbReference type="Pfam" id="PF07973">
    <property type="entry name" value="tRNA_SAD"/>
    <property type="match status" value="1"/>
</dbReference>
<dbReference type="PRINTS" id="PR01047">
    <property type="entry name" value="TRNASYNTHTHR"/>
</dbReference>
<dbReference type="SMART" id="SM00863">
    <property type="entry name" value="tRNA_SAD"/>
    <property type="match status" value="1"/>
</dbReference>
<dbReference type="SUPFAM" id="SSF52954">
    <property type="entry name" value="Class II aaRS ABD-related"/>
    <property type="match status" value="1"/>
</dbReference>
<dbReference type="SUPFAM" id="SSF55681">
    <property type="entry name" value="Class II aaRS and biotin synthetases"/>
    <property type="match status" value="1"/>
</dbReference>
<dbReference type="SUPFAM" id="SSF81271">
    <property type="entry name" value="TGS-like"/>
    <property type="match status" value="1"/>
</dbReference>
<dbReference type="SUPFAM" id="SSF55186">
    <property type="entry name" value="ThrRS/AlaRS common domain"/>
    <property type="match status" value="1"/>
</dbReference>
<dbReference type="PROSITE" id="PS50862">
    <property type="entry name" value="AA_TRNA_LIGASE_II"/>
    <property type="match status" value="1"/>
</dbReference>
<dbReference type="PROSITE" id="PS51880">
    <property type="entry name" value="TGS"/>
    <property type="match status" value="1"/>
</dbReference>
<sequence length="642" mass="73994">MPVITLPDGSQRHYDHPVSPMDVALDIGPGLAKATIAGRVNGELVDASDLIENDATLSIITAKDEEGLEIIRHSCAHLLGHAIKQLWPHTKMAIGPVVDNGFYYDVDLDRTLTQEDVEALEKRMHELAEKNYDVIKKKVSWHEARETFVKRGESYKVSILDENIAHDDKPGLYHHEEYVDMCRGPHVPNMRFCHHFKLMKTAGAYWRGDSNNKMLQRIYGTAWADKKALNAYLQRLEEAAKRDHRKIGKQLDLYHMQEEAPGMVFWHNDGWTIFRELEVFVRSKLKEYQYQEVKGPFMMDRVLWEKTGHWDNYKDAMFTTSSENREYCIKPMNCPGHVQIFNQGLKSYRDLPLRMAEFGSCHRNEPSGALHGLMRVRGFTQDDAHIFCTEEQIRDEVNACIRMVYDMYSTFGFEKIVVKLSTRPDKRIGSDEMWDRAEADLAVALEENNIPFEYQLGEGAFYGPKIEFTLYDCLDRAWQCGTVQLDFSLPSRLSASYVGEDNERKVPVMIHRAILGSMERFIGILTEEFAGFFPTWLAPVQVVVMNITDSQSEYVNELTQKLQNAGIRVKADLRNEKIGFKIREHTLRRVPYMLVCGDKEVEAGKVAVRTRRGKDLGSLDVNDVIEKLQQEIRSRSLQQLEE</sequence>
<protein>
    <recommendedName>
        <fullName evidence="1">Threonine--tRNA ligase</fullName>
        <ecNumber evidence="1">6.1.1.3</ecNumber>
    </recommendedName>
    <alternativeName>
        <fullName evidence="1">Threonyl-tRNA synthetase</fullName>
        <shortName evidence="1">ThrRS</shortName>
    </alternativeName>
</protein>
<keyword id="KW-0030">Aminoacyl-tRNA synthetase</keyword>
<keyword id="KW-0067">ATP-binding</keyword>
<keyword id="KW-0963">Cytoplasm</keyword>
<keyword id="KW-0436">Ligase</keyword>
<keyword id="KW-0479">Metal-binding</keyword>
<keyword id="KW-0547">Nucleotide-binding</keyword>
<keyword id="KW-0648">Protein biosynthesis</keyword>
<keyword id="KW-0694">RNA-binding</keyword>
<keyword id="KW-0820">tRNA-binding</keyword>
<keyword id="KW-0862">Zinc</keyword>
<comment type="function">
    <text evidence="1">Catalyzes the attachment of threonine to tRNA(Thr) in a two-step reaction: L-threonine is first activated by ATP to form Thr-AMP and then transferred to the acceptor end of tRNA(Thr). Also edits incorrectly charged L-seryl-tRNA(Thr).</text>
</comment>
<comment type="catalytic activity">
    <reaction evidence="1">
        <text>tRNA(Thr) + L-threonine + ATP = L-threonyl-tRNA(Thr) + AMP + diphosphate + H(+)</text>
        <dbReference type="Rhea" id="RHEA:24624"/>
        <dbReference type="Rhea" id="RHEA-COMP:9670"/>
        <dbReference type="Rhea" id="RHEA-COMP:9704"/>
        <dbReference type="ChEBI" id="CHEBI:15378"/>
        <dbReference type="ChEBI" id="CHEBI:30616"/>
        <dbReference type="ChEBI" id="CHEBI:33019"/>
        <dbReference type="ChEBI" id="CHEBI:57926"/>
        <dbReference type="ChEBI" id="CHEBI:78442"/>
        <dbReference type="ChEBI" id="CHEBI:78534"/>
        <dbReference type="ChEBI" id="CHEBI:456215"/>
        <dbReference type="EC" id="6.1.1.3"/>
    </reaction>
</comment>
<comment type="cofactor">
    <cofactor evidence="1">
        <name>Zn(2+)</name>
        <dbReference type="ChEBI" id="CHEBI:29105"/>
    </cofactor>
    <text evidence="1">Binds 1 zinc ion per subunit.</text>
</comment>
<comment type="subunit">
    <text evidence="1">Homodimer.</text>
</comment>
<comment type="subcellular location">
    <subcellularLocation>
        <location evidence="1">Cytoplasm</location>
    </subcellularLocation>
</comment>
<comment type="similarity">
    <text evidence="1">Belongs to the class-II aminoacyl-tRNA synthetase family.</text>
</comment>
<reference key="1">
    <citation type="journal article" date="2011" name="J. Bacteriol.">
        <title>Comparative genomics of 28 Salmonella enterica isolates: evidence for CRISPR-mediated adaptive sublineage evolution.</title>
        <authorList>
            <person name="Fricke W.F."/>
            <person name="Mammel M.K."/>
            <person name="McDermott P.F."/>
            <person name="Tartera C."/>
            <person name="White D.G."/>
            <person name="Leclerc J.E."/>
            <person name="Ravel J."/>
            <person name="Cebula T.A."/>
        </authorList>
    </citation>
    <scope>NUCLEOTIDE SEQUENCE [LARGE SCALE GENOMIC DNA]</scope>
    <source>
        <strain>CVM19633</strain>
    </source>
</reference>